<reference key="1">
    <citation type="journal article" date="2004" name="Science">
        <title>Illuminating the evolutionary history of chlamydiae.</title>
        <authorList>
            <person name="Horn M."/>
            <person name="Collingro A."/>
            <person name="Schmitz-Esser S."/>
            <person name="Beier C.L."/>
            <person name="Purkhold U."/>
            <person name="Fartmann B."/>
            <person name="Brandt P."/>
            <person name="Nyakatura G.J."/>
            <person name="Droege M."/>
            <person name="Frishman D."/>
            <person name="Rattei T."/>
            <person name="Mewes H.-W."/>
            <person name="Wagner M."/>
        </authorList>
    </citation>
    <scope>NUCLEOTIDE SEQUENCE [LARGE SCALE GENOMIC DNA]</scope>
    <source>
        <strain>UWE25</strain>
    </source>
</reference>
<accession>Q6MA75</accession>
<protein>
    <recommendedName>
        <fullName evidence="1">tRNA-specific 2-thiouridylase MnmA</fullName>
        <ecNumber evidence="1">2.8.1.13</ecNumber>
    </recommendedName>
</protein>
<dbReference type="EC" id="2.8.1.13" evidence="1"/>
<dbReference type="EMBL" id="BX908798">
    <property type="protein sequence ID" value="CAF24524.1"/>
    <property type="molecule type" value="Genomic_DNA"/>
</dbReference>
<dbReference type="SMR" id="Q6MA75"/>
<dbReference type="STRING" id="264201.pc1800"/>
<dbReference type="KEGG" id="pcu:PC_RS08625"/>
<dbReference type="eggNOG" id="COG0482">
    <property type="taxonomic scope" value="Bacteria"/>
</dbReference>
<dbReference type="HOGENOM" id="CLU_035188_1_0_0"/>
<dbReference type="OrthoDB" id="9800696at2"/>
<dbReference type="Proteomes" id="UP000000529">
    <property type="component" value="Chromosome"/>
</dbReference>
<dbReference type="GO" id="GO:0005737">
    <property type="term" value="C:cytoplasm"/>
    <property type="evidence" value="ECO:0007669"/>
    <property type="project" value="UniProtKB-SubCell"/>
</dbReference>
<dbReference type="GO" id="GO:0005524">
    <property type="term" value="F:ATP binding"/>
    <property type="evidence" value="ECO:0007669"/>
    <property type="project" value="UniProtKB-KW"/>
</dbReference>
<dbReference type="GO" id="GO:0000049">
    <property type="term" value="F:tRNA binding"/>
    <property type="evidence" value="ECO:0007669"/>
    <property type="project" value="UniProtKB-KW"/>
</dbReference>
<dbReference type="GO" id="GO:0103016">
    <property type="term" value="F:tRNA-uridine 2-sulfurtransferase activity"/>
    <property type="evidence" value="ECO:0007669"/>
    <property type="project" value="UniProtKB-EC"/>
</dbReference>
<dbReference type="GO" id="GO:0002143">
    <property type="term" value="P:tRNA wobble position uridine thiolation"/>
    <property type="evidence" value="ECO:0007669"/>
    <property type="project" value="TreeGrafter"/>
</dbReference>
<dbReference type="CDD" id="cd01998">
    <property type="entry name" value="MnmA_TRMU-like"/>
    <property type="match status" value="1"/>
</dbReference>
<dbReference type="FunFam" id="2.30.30.280:FF:000001">
    <property type="entry name" value="tRNA-specific 2-thiouridylase MnmA"/>
    <property type="match status" value="1"/>
</dbReference>
<dbReference type="FunFam" id="2.40.30.10:FF:000023">
    <property type="entry name" value="tRNA-specific 2-thiouridylase MnmA"/>
    <property type="match status" value="1"/>
</dbReference>
<dbReference type="FunFam" id="3.40.50.620:FF:000004">
    <property type="entry name" value="tRNA-specific 2-thiouridylase MnmA"/>
    <property type="match status" value="1"/>
</dbReference>
<dbReference type="Gene3D" id="2.30.30.280">
    <property type="entry name" value="Adenine nucleotide alpha hydrolases-like domains"/>
    <property type="match status" value="1"/>
</dbReference>
<dbReference type="Gene3D" id="3.40.50.620">
    <property type="entry name" value="HUPs"/>
    <property type="match status" value="1"/>
</dbReference>
<dbReference type="Gene3D" id="2.40.30.10">
    <property type="entry name" value="Translation factors"/>
    <property type="match status" value="1"/>
</dbReference>
<dbReference type="HAMAP" id="MF_00144">
    <property type="entry name" value="tRNA_thiouridyl_MnmA"/>
    <property type="match status" value="1"/>
</dbReference>
<dbReference type="InterPro" id="IPR004506">
    <property type="entry name" value="MnmA-like"/>
</dbReference>
<dbReference type="InterPro" id="IPR046885">
    <property type="entry name" value="MnmA-like_C"/>
</dbReference>
<dbReference type="InterPro" id="IPR046884">
    <property type="entry name" value="MnmA-like_central"/>
</dbReference>
<dbReference type="InterPro" id="IPR023382">
    <property type="entry name" value="MnmA-like_central_sf"/>
</dbReference>
<dbReference type="InterPro" id="IPR014729">
    <property type="entry name" value="Rossmann-like_a/b/a_fold"/>
</dbReference>
<dbReference type="NCBIfam" id="NF001138">
    <property type="entry name" value="PRK00143.1"/>
    <property type="match status" value="1"/>
</dbReference>
<dbReference type="NCBIfam" id="TIGR00420">
    <property type="entry name" value="trmU"/>
    <property type="match status" value="1"/>
</dbReference>
<dbReference type="PANTHER" id="PTHR11933:SF5">
    <property type="entry name" value="MITOCHONDRIAL TRNA-SPECIFIC 2-THIOURIDYLASE 1"/>
    <property type="match status" value="1"/>
</dbReference>
<dbReference type="PANTHER" id="PTHR11933">
    <property type="entry name" value="TRNA 5-METHYLAMINOMETHYL-2-THIOURIDYLATE -METHYLTRANSFERASE"/>
    <property type="match status" value="1"/>
</dbReference>
<dbReference type="Pfam" id="PF03054">
    <property type="entry name" value="tRNA_Me_trans"/>
    <property type="match status" value="1"/>
</dbReference>
<dbReference type="Pfam" id="PF20258">
    <property type="entry name" value="tRNA_Me_trans_C"/>
    <property type="match status" value="1"/>
</dbReference>
<dbReference type="Pfam" id="PF20259">
    <property type="entry name" value="tRNA_Me_trans_M"/>
    <property type="match status" value="1"/>
</dbReference>
<dbReference type="SUPFAM" id="SSF52402">
    <property type="entry name" value="Adenine nucleotide alpha hydrolases-like"/>
    <property type="match status" value="1"/>
</dbReference>
<evidence type="ECO:0000255" key="1">
    <source>
        <dbReference type="HAMAP-Rule" id="MF_00144"/>
    </source>
</evidence>
<organism>
    <name type="scientific">Protochlamydia amoebophila (strain UWE25)</name>
    <dbReference type="NCBI Taxonomy" id="264201"/>
    <lineage>
        <taxon>Bacteria</taxon>
        <taxon>Pseudomonadati</taxon>
        <taxon>Chlamydiota</taxon>
        <taxon>Chlamydiia</taxon>
        <taxon>Parachlamydiales</taxon>
        <taxon>Parachlamydiaceae</taxon>
        <taxon>Candidatus Protochlamydia</taxon>
    </lineage>
</organism>
<name>MNMA_PARUW</name>
<proteinExistence type="inferred from homology"/>
<feature type="chain" id="PRO_0000349755" description="tRNA-specific 2-thiouridylase MnmA">
    <location>
        <begin position="1"/>
        <end position="376"/>
    </location>
</feature>
<feature type="region of interest" description="Interaction with target base in tRNA" evidence="1">
    <location>
        <begin position="96"/>
        <end position="98"/>
    </location>
</feature>
<feature type="region of interest" description="Interaction with tRNA" evidence="1">
    <location>
        <begin position="148"/>
        <end position="150"/>
    </location>
</feature>
<feature type="region of interest" description="Interaction with tRNA" evidence="1">
    <location>
        <begin position="305"/>
        <end position="306"/>
    </location>
</feature>
<feature type="active site" description="Nucleophile" evidence="1">
    <location>
        <position position="101"/>
    </location>
</feature>
<feature type="active site" description="Cysteine persulfide intermediate" evidence="1">
    <location>
        <position position="198"/>
    </location>
</feature>
<feature type="binding site" evidence="1">
    <location>
        <begin position="10"/>
        <end position="17"/>
    </location>
    <ligand>
        <name>ATP</name>
        <dbReference type="ChEBI" id="CHEBI:30616"/>
    </ligand>
</feature>
<feature type="binding site" evidence="1">
    <location>
        <position position="36"/>
    </location>
    <ligand>
        <name>ATP</name>
        <dbReference type="ChEBI" id="CHEBI:30616"/>
    </ligand>
</feature>
<feature type="binding site" evidence="1">
    <location>
        <position position="125"/>
    </location>
    <ligand>
        <name>ATP</name>
        <dbReference type="ChEBI" id="CHEBI:30616"/>
    </ligand>
</feature>
<feature type="site" description="Interaction with tRNA" evidence="1">
    <location>
        <position position="126"/>
    </location>
</feature>
<feature type="site" description="Interaction with tRNA" evidence="1">
    <location>
        <position position="338"/>
    </location>
</feature>
<feature type="disulfide bond" description="Alternate" evidence="1">
    <location>
        <begin position="101"/>
        <end position="198"/>
    </location>
</feature>
<gene>
    <name evidence="1" type="primary">mnmA</name>
    <name type="ordered locus">pc1800</name>
</gene>
<keyword id="KW-0067">ATP-binding</keyword>
<keyword id="KW-0963">Cytoplasm</keyword>
<keyword id="KW-1015">Disulfide bond</keyword>
<keyword id="KW-0547">Nucleotide-binding</keyword>
<keyword id="KW-1185">Reference proteome</keyword>
<keyword id="KW-0694">RNA-binding</keyword>
<keyword id="KW-0808">Transferase</keyword>
<keyword id="KW-0819">tRNA processing</keyword>
<keyword id="KW-0820">tRNA-binding</keyword>
<sequence>MKNQKTVVVGMSGGVDSSVSALLMKEQGYNVIGLFMKNWEEKDENGVCSSAQDYDDVRRVCDHINIPYYAVNFVENYRKQVFTQFIADFQKGWTPNPDILCNREIKFKVFLEKALELGADFLATGHYCQNLILDKGSPSLVKGIDHNKDQTYFLYTLNQQILQQVLFPVGGLEKSQVRDIARKHQLVTAEKKDSTGICFIGERDFRSFLSQYVAIQPGAFQTLQGKNVGKHMGTAYYTLGQRKGLGIGGAGEAWFVVGKDHERGIVFVEQGANHPALYCDELIATDLSWVAEAPLLPYTCQSKVRYRQNDQFCTIHRIENGKAFVTFDRPQRAVTPGQSIVFYVGNICLGGGVIQQPGPTYYDQKKSLPHQSPRND</sequence>
<comment type="function">
    <text evidence="1">Catalyzes the 2-thiolation of uridine at the wobble position (U34) of tRNA, leading to the formation of s(2)U34.</text>
</comment>
<comment type="catalytic activity">
    <reaction evidence="1">
        <text>S-sulfanyl-L-cysteinyl-[protein] + uridine(34) in tRNA + AH2 + ATP = 2-thiouridine(34) in tRNA + L-cysteinyl-[protein] + A + AMP + diphosphate + H(+)</text>
        <dbReference type="Rhea" id="RHEA:47032"/>
        <dbReference type="Rhea" id="RHEA-COMP:10131"/>
        <dbReference type="Rhea" id="RHEA-COMP:11726"/>
        <dbReference type="Rhea" id="RHEA-COMP:11727"/>
        <dbReference type="Rhea" id="RHEA-COMP:11728"/>
        <dbReference type="ChEBI" id="CHEBI:13193"/>
        <dbReference type="ChEBI" id="CHEBI:15378"/>
        <dbReference type="ChEBI" id="CHEBI:17499"/>
        <dbReference type="ChEBI" id="CHEBI:29950"/>
        <dbReference type="ChEBI" id="CHEBI:30616"/>
        <dbReference type="ChEBI" id="CHEBI:33019"/>
        <dbReference type="ChEBI" id="CHEBI:61963"/>
        <dbReference type="ChEBI" id="CHEBI:65315"/>
        <dbReference type="ChEBI" id="CHEBI:87170"/>
        <dbReference type="ChEBI" id="CHEBI:456215"/>
        <dbReference type="EC" id="2.8.1.13"/>
    </reaction>
</comment>
<comment type="subcellular location">
    <subcellularLocation>
        <location evidence="1">Cytoplasm</location>
    </subcellularLocation>
</comment>
<comment type="similarity">
    <text evidence="1">Belongs to the MnmA/TRMU family.</text>
</comment>